<keyword id="KW-0687">Ribonucleoprotein</keyword>
<keyword id="KW-0689">Ribosomal protein</keyword>
<keyword id="KW-0694">RNA-binding</keyword>
<keyword id="KW-0699">rRNA-binding</keyword>
<feature type="chain" id="PRO_1000052972" description="Large ribosomal subunit protein bL25">
    <location>
        <begin position="1"/>
        <end position="92"/>
    </location>
</feature>
<organism>
    <name type="scientific">Vibrio campbellii (strain ATCC BAA-1116)</name>
    <dbReference type="NCBI Taxonomy" id="2902295"/>
    <lineage>
        <taxon>Bacteria</taxon>
        <taxon>Pseudomonadati</taxon>
        <taxon>Pseudomonadota</taxon>
        <taxon>Gammaproteobacteria</taxon>
        <taxon>Vibrionales</taxon>
        <taxon>Vibrionaceae</taxon>
        <taxon>Vibrio</taxon>
    </lineage>
</organism>
<evidence type="ECO:0000255" key="1">
    <source>
        <dbReference type="HAMAP-Rule" id="MF_01336"/>
    </source>
</evidence>
<evidence type="ECO:0000305" key="2"/>
<sequence>MKFEAVVRTELGKGASRRLRHAGKFPAVVYGGEEAAVAIVLNHDDIVNQMDKPEFYEGIVLVIDGAEVKVKPQDVQRHAFKPKVEHMDFIRI</sequence>
<gene>
    <name evidence="1" type="primary">rplY</name>
    <name type="ordered locus">VIBHAR_02662</name>
</gene>
<name>RL25_VIBC1</name>
<protein>
    <recommendedName>
        <fullName evidence="1">Large ribosomal subunit protein bL25</fullName>
    </recommendedName>
    <alternativeName>
        <fullName evidence="2">50S ribosomal protein L25</fullName>
    </alternativeName>
</protein>
<proteinExistence type="inferred from homology"/>
<dbReference type="EMBL" id="CP000789">
    <property type="protein sequence ID" value="ABU71623.1"/>
    <property type="molecule type" value="Genomic_DNA"/>
</dbReference>
<dbReference type="RefSeq" id="WP_005529240.1">
    <property type="nucleotide sequence ID" value="NC_022269.1"/>
</dbReference>
<dbReference type="SMR" id="A7MZG9"/>
<dbReference type="GeneID" id="67377654"/>
<dbReference type="KEGG" id="vha:VIBHAR_02662"/>
<dbReference type="PATRIC" id="fig|338187.25.peg.44"/>
<dbReference type="Proteomes" id="UP000008152">
    <property type="component" value="Chromosome I"/>
</dbReference>
<dbReference type="GO" id="GO:0022625">
    <property type="term" value="C:cytosolic large ribosomal subunit"/>
    <property type="evidence" value="ECO:0007669"/>
    <property type="project" value="TreeGrafter"/>
</dbReference>
<dbReference type="GO" id="GO:0008097">
    <property type="term" value="F:5S rRNA binding"/>
    <property type="evidence" value="ECO:0007669"/>
    <property type="project" value="InterPro"/>
</dbReference>
<dbReference type="GO" id="GO:0003735">
    <property type="term" value="F:structural constituent of ribosome"/>
    <property type="evidence" value="ECO:0007669"/>
    <property type="project" value="InterPro"/>
</dbReference>
<dbReference type="GO" id="GO:0006412">
    <property type="term" value="P:translation"/>
    <property type="evidence" value="ECO:0007669"/>
    <property type="project" value="UniProtKB-UniRule"/>
</dbReference>
<dbReference type="CDD" id="cd00495">
    <property type="entry name" value="Ribosomal_L25_TL5_CTC"/>
    <property type="match status" value="1"/>
</dbReference>
<dbReference type="FunFam" id="2.40.240.10:FF:000002">
    <property type="entry name" value="50S ribosomal protein L25"/>
    <property type="match status" value="1"/>
</dbReference>
<dbReference type="Gene3D" id="2.40.240.10">
    <property type="entry name" value="Ribosomal Protein L25, Chain P"/>
    <property type="match status" value="1"/>
</dbReference>
<dbReference type="HAMAP" id="MF_01336">
    <property type="entry name" value="Ribosomal_bL25"/>
    <property type="match status" value="1"/>
</dbReference>
<dbReference type="InterPro" id="IPR020056">
    <property type="entry name" value="Rbsml_bL25/Gln-tRNA_synth_N"/>
</dbReference>
<dbReference type="InterPro" id="IPR011035">
    <property type="entry name" value="Ribosomal_bL25/Gln-tRNA_synth"/>
</dbReference>
<dbReference type="InterPro" id="IPR020055">
    <property type="entry name" value="Ribosomal_bL25_short"/>
</dbReference>
<dbReference type="InterPro" id="IPR029751">
    <property type="entry name" value="Ribosomal_L25_dom"/>
</dbReference>
<dbReference type="InterPro" id="IPR020930">
    <property type="entry name" value="Ribosomal_uL5_bac-type"/>
</dbReference>
<dbReference type="NCBIfam" id="NF004612">
    <property type="entry name" value="PRK05943.1"/>
    <property type="match status" value="1"/>
</dbReference>
<dbReference type="PANTHER" id="PTHR33284">
    <property type="entry name" value="RIBOSOMAL PROTEIN L25/GLN-TRNA SYNTHETASE, ANTI-CODON-BINDING DOMAIN-CONTAINING PROTEIN"/>
    <property type="match status" value="1"/>
</dbReference>
<dbReference type="PANTHER" id="PTHR33284:SF1">
    <property type="entry name" value="RIBOSOMAL PROTEIN L25_GLN-TRNA SYNTHETASE, ANTI-CODON-BINDING DOMAIN-CONTAINING PROTEIN"/>
    <property type="match status" value="1"/>
</dbReference>
<dbReference type="Pfam" id="PF01386">
    <property type="entry name" value="Ribosomal_L25p"/>
    <property type="match status" value="1"/>
</dbReference>
<dbReference type="SUPFAM" id="SSF50715">
    <property type="entry name" value="Ribosomal protein L25-like"/>
    <property type="match status" value="1"/>
</dbReference>
<reference key="1">
    <citation type="submission" date="2007-08" db="EMBL/GenBank/DDBJ databases">
        <authorList>
            <consortium name="The Vibrio harveyi Genome Sequencing Project"/>
            <person name="Bassler B."/>
            <person name="Clifton S.W."/>
            <person name="Fulton L."/>
            <person name="Delehaunty K."/>
            <person name="Fronick C."/>
            <person name="Harrison M."/>
            <person name="Markivic C."/>
            <person name="Fulton R."/>
            <person name="Tin-Wollam A.-M."/>
            <person name="Shah N."/>
            <person name="Pepin K."/>
            <person name="Nash W."/>
            <person name="Thiruvilangam P."/>
            <person name="Bhonagiri V."/>
            <person name="Waters C."/>
            <person name="Tu K.C."/>
            <person name="Irgon J."/>
            <person name="Wilson R.K."/>
        </authorList>
    </citation>
    <scope>NUCLEOTIDE SEQUENCE [LARGE SCALE GENOMIC DNA]</scope>
    <source>
        <strain>ATCC BAA-1116 / BB120</strain>
    </source>
</reference>
<comment type="function">
    <text evidence="1">This is one of the proteins that binds to the 5S RNA in the ribosome where it forms part of the central protuberance.</text>
</comment>
<comment type="subunit">
    <text evidence="1">Part of the 50S ribosomal subunit; part of the 5S rRNA/L5/L18/L25 subcomplex. Contacts the 5S rRNA. Binds to the 5S rRNA independently of L5 and L18.</text>
</comment>
<comment type="similarity">
    <text evidence="1">Belongs to the bacterial ribosomal protein bL25 family.</text>
</comment>
<accession>A7MZG9</accession>